<proteinExistence type="inferred from homology"/>
<gene>
    <name type="primary">CHO2</name>
    <name type="ordered locus">DEHA2A12936g</name>
</gene>
<accession>Q6BY28</accession>
<evidence type="ECO:0000255" key="1">
    <source>
        <dbReference type="HAMAP-Rule" id="MF_03217"/>
    </source>
</evidence>
<protein>
    <recommendedName>
        <fullName evidence="1">Phosphatidylethanolamine N-methyltransferase</fullName>
        <shortName evidence="1">PE methyltransferase</shortName>
        <shortName evidence="1">PEAMT</shortName>
        <shortName evidence="1">PEMT</shortName>
        <ecNumber evidence="1">2.1.1.17</ecNumber>
    </recommendedName>
</protein>
<organism>
    <name type="scientific">Debaryomyces hansenii (strain ATCC 36239 / CBS 767 / BCRC 21394 / JCM 1990 / NBRC 0083 / IGC 2968)</name>
    <name type="common">Yeast</name>
    <name type="synonym">Torulaspora hansenii</name>
    <dbReference type="NCBI Taxonomy" id="284592"/>
    <lineage>
        <taxon>Eukaryota</taxon>
        <taxon>Fungi</taxon>
        <taxon>Dikarya</taxon>
        <taxon>Ascomycota</taxon>
        <taxon>Saccharomycotina</taxon>
        <taxon>Pichiomycetes</taxon>
        <taxon>Debaryomycetaceae</taxon>
        <taxon>Debaryomyces</taxon>
    </lineage>
</organism>
<reference key="1">
    <citation type="journal article" date="2004" name="Nature">
        <title>Genome evolution in yeasts.</title>
        <authorList>
            <person name="Dujon B."/>
            <person name="Sherman D."/>
            <person name="Fischer G."/>
            <person name="Durrens P."/>
            <person name="Casaregola S."/>
            <person name="Lafontaine I."/>
            <person name="de Montigny J."/>
            <person name="Marck C."/>
            <person name="Neuveglise C."/>
            <person name="Talla E."/>
            <person name="Goffard N."/>
            <person name="Frangeul L."/>
            <person name="Aigle M."/>
            <person name="Anthouard V."/>
            <person name="Babour A."/>
            <person name="Barbe V."/>
            <person name="Barnay S."/>
            <person name="Blanchin S."/>
            <person name="Beckerich J.-M."/>
            <person name="Beyne E."/>
            <person name="Bleykasten C."/>
            <person name="Boisrame A."/>
            <person name="Boyer J."/>
            <person name="Cattolico L."/>
            <person name="Confanioleri F."/>
            <person name="de Daruvar A."/>
            <person name="Despons L."/>
            <person name="Fabre E."/>
            <person name="Fairhead C."/>
            <person name="Ferry-Dumazet H."/>
            <person name="Groppi A."/>
            <person name="Hantraye F."/>
            <person name="Hennequin C."/>
            <person name="Jauniaux N."/>
            <person name="Joyet P."/>
            <person name="Kachouri R."/>
            <person name="Kerrest A."/>
            <person name="Koszul R."/>
            <person name="Lemaire M."/>
            <person name="Lesur I."/>
            <person name="Ma L."/>
            <person name="Muller H."/>
            <person name="Nicaud J.-M."/>
            <person name="Nikolski M."/>
            <person name="Oztas S."/>
            <person name="Ozier-Kalogeropoulos O."/>
            <person name="Pellenz S."/>
            <person name="Potier S."/>
            <person name="Richard G.-F."/>
            <person name="Straub M.-L."/>
            <person name="Suleau A."/>
            <person name="Swennen D."/>
            <person name="Tekaia F."/>
            <person name="Wesolowski-Louvel M."/>
            <person name="Westhof E."/>
            <person name="Wirth B."/>
            <person name="Zeniou-Meyer M."/>
            <person name="Zivanovic Y."/>
            <person name="Bolotin-Fukuhara M."/>
            <person name="Thierry A."/>
            <person name="Bouchier C."/>
            <person name="Caudron B."/>
            <person name="Scarpelli C."/>
            <person name="Gaillardin C."/>
            <person name="Weissenbach J."/>
            <person name="Wincker P."/>
            <person name="Souciet J.-L."/>
        </authorList>
    </citation>
    <scope>NUCLEOTIDE SEQUENCE [LARGE SCALE GENOMIC DNA]</scope>
    <source>
        <strain>ATCC 36239 / CBS 767 / BCRC 21394 / JCM 1990 / NBRC 0083 / IGC 2968</strain>
    </source>
</reference>
<sequence length="875" mass="100702">MKETKVQNTIAGAKGITFSGDTFVVPETHDMVKTLFDPMVRKSYCEMIILLILAANGLVFWLINNNTLRIETFIGLYIFWRLSYNFGIGYLLNVQSNHHRLVKWARKAQVFKKNGSLVSRLAEKEIKSQMGPEYDVQKYPIEFNTWLLFRKVVDLILMSDFTTFICLVVVCAINKDYQFINSDQQEVWLISTRLILGTVLILFNLWVKVNAHNTIKDYAWYWGDFFFRQINNEDLIFDGVFEMVPHPMYSVGYVGYYGFAIISKSYTILTVAIFGHFLQMIFLHYIENPHIDKIYGPSGNEADIEMLLKLKDLRHFDNIKPLVGLLNFTWLRASDMTNLIMVGTYSFTIPYLASLVDTVRVGETGVNPGTILFILTIVIKVFESLSINILLILQSYYKTFTKWYLSNDISVEKTLNNWSIMYNSLISLTYSSFFGLNFYHVLIGLESDKLFINSWVYLRIFLGILLVFTQVWINSSIIDSIGYFGWFYGDFFIPKTSQQKAHLTKAGVYRYLNNPEQIFGVCGIMGVTLIIPSLENLICCVLWVTNNFIRINFIEKAHMIKIYGEREVMKDSGVTKTFKKHLIPGAIQRRLSKGSEDNSDLLNQHRRKSTIMAGATDSLDNFIKELKNTNTRLTKQNILELSQNLYFENSDYKLVIKNLNTTENNLSTAFIGEPIEVEWKAPENHSPKDWIGLYKTVQTTYSRYKTLISSSDRWTQVTSDSGSYVFEGEKLFWEEGIYEFRYHLDGKHDVAYISEPFELTSANIEVPPSTEGSIVLANELKAKVFDRAIVGFGSIDSPIDSAVQKSGSIIQTYNRLAYVISKSTGIHINAKVFLYADNEDELTVHKLSLKLINIRKVLDDLSHAHYPLSEEKKEE</sequence>
<name>CHO2_DEBHA</name>
<feature type="chain" id="PRO_0000405889" description="Phosphatidylethanolamine N-methyltransferase">
    <location>
        <begin position="1"/>
        <end position="875"/>
    </location>
</feature>
<feature type="topological domain" description="Lumenal" evidence="1">
    <location>
        <begin position="1"/>
        <end position="42"/>
    </location>
</feature>
<feature type="transmembrane region" description="Helical" evidence="1">
    <location>
        <begin position="43"/>
        <end position="63"/>
    </location>
</feature>
<feature type="topological domain" description="Cytoplasmic" evidence="1">
    <location>
        <begin position="64"/>
        <end position="71"/>
    </location>
</feature>
<feature type="transmembrane region" description="Helical" evidence="1">
    <location>
        <begin position="72"/>
        <end position="92"/>
    </location>
</feature>
<feature type="topological domain" description="Lumenal" evidence="1">
    <location>
        <begin position="93"/>
        <end position="152"/>
    </location>
</feature>
<feature type="transmembrane region" description="Helical" evidence="1">
    <location>
        <begin position="153"/>
        <end position="173"/>
    </location>
</feature>
<feature type="topological domain" description="Cytoplasmic" evidence="1">
    <location>
        <begin position="174"/>
        <end position="186"/>
    </location>
</feature>
<feature type="transmembrane region" description="Helical" evidence="1">
    <location>
        <begin position="187"/>
        <end position="207"/>
    </location>
</feature>
<feature type="topological domain" description="Lumenal" evidence="1">
    <location>
        <begin position="208"/>
        <end position="242"/>
    </location>
</feature>
<feature type="transmembrane region" description="Helical" evidence="1">
    <location>
        <begin position="243"/>
        <end position="263"/>
    </location>
</feature>
<feature type="topological domain" description="Cytoplasmic" evidence="1">
    <location>
        <begin position="264"/>
        <end position="265"/>
    </location>
</feature>
<feature type="transmembrane region" description="Helical" evidence="1">
    <location>
        <begin position="266"/>
        <end position="286"/>
    </location>
</feature>
<feature type="topological domain" description="Lumenal" evidence="1">
    <location>
        <begin position="287"/>
        <end position="338"/>
    </location>
</feature>
<feature type="transmembrane region" description="Helical" evidence="1">
    <location>
        <begin position="339"/>
        <end position="359"/>
    </location>
</feature>
<feature type="topological domain" description="Cytoplasmic" evidence="1">
    <location>
        <begin position="360"/>
        <end position="370"/>
    </location>
</feature>
<feature type="transmembrane region" description="Helical" evidence="1">
    <location>
        <begin position="371"/>
        <end position="391"/>
    </location>
</feature>
<feature type="topological domain" description="Lumenal" evidence="1">
    <location>
        <begin position="392"/>
        <end position="424"/>
    </location>
</feature>
<feature type="transmembrane region" description="Helical" evidence="1">
    <location>
        <begin position="425"/>
        <end position="445"/>
    </location>
</feature>
<feature type="topological domain" description="Cytoplasmic" evidence="1">
    <location>
        <begin position="446"/>
        <end position="459"/>
    </location>
</feature>
<feature type="transmembrane region" description="Helical" evidence="1">
    <location>
        <begin position="460"/>
        <end position="480"/>
    </location>
</feature>
<feature type="topological domain" description="Lumenal" evidence="1">
    <location>
        <begin position="481"/>
        <end position="517"/>
    </location>
</feature>
<feature type="transmembrane region" description="Helical" evidence="1">
    <location>
        <begin position="518"/>
        <end position="538"/>
    </location>
</feature>
<feature type="topological domain" description="Cytoplasmic" evidence="1">
    <location>
        <begin position="539"/>
        <end position="875"/>
    </location>
</feature>
<keyword id="KW-0256">Endoplasmic reticulum</keyword>
<keyword id="KW-0444">Lipid biosynthesis</keyword>
<keyword id="KW-0443">Lipid metabolism</keyword>
<keyword id="KW-0472">Membrane</keyword>
<keyword id="KW-0489">Methyltransferase</keyword>
<keyword id="KW-0594">Phospholipid biosynthesis</keyword>
<keyword id="KW-1208">Phospholipid metabolism</keyword>
<keyword id="KW-1185">Reference proteome</keyword>
<keyword id="KW-0949">S-adenosyl-L-methionine</keyword>
<keyword id="KW-0808">Transferase</keyword>
<keyword id="KW-0812">Transmembrane</keyword>
<keyword id="KW-1133">Transmembrane helix</keyword>
<comment type="function">
    <text evidence="1">Catalyzes the first step of the methylation pathway of phosphatidylcholine biosynthesis, the SAM-dependent methylation of phosphatidylethanolamine (PE) to phosphatidylmonomethylethanolamine (PMME).</text>
</comment>
<comment type="catalytic activity">
    <reaction evidence="1">
        <text>a 1,2-diacyl-sn-glycero-3-phosphoethanolamine + S-adenosyl-L-methionine = a 1,2-diacyl-sn-glycero-3-phospho-N-methylethanolamine + S-adenosyl-L-homocysteine + H(+)</text>
        <dbReference type="Rhea" id="RHEA:11164"/>
        <dbReference type="ChEBI" id="CHEBI:15378"/>
        <dbReference type="ChEBI" id="CHEBI:57856"/>
        <dbReference type="ChEBI" id="CHEBI:59789"/>
        <dbReference type="ChEBI" id="CHEBI:64573"/>
        <dbReference type="ChEBI" id="CHEBI:64612"/>
        <dbReference type="EC" id="2.1.1.17"/>
    </reaction>
</comment>
<comment type="pathway">
    <text evidence="1">Phospholipid metabolism; phosphatidylcholine biosynthesis.</text>
</comment>
<comment type="subcellular location">
    <subcellularLocation>
        <location evidence="1">Endoplasmic reticulum membrane</location>
        <topology evidence="1">Multi-pass membrane protein</topology>
    </subcellularLocation>
</comment>
<comment type="similarity">
    <text evidence="1">Belongs to the class VI-like SAM-binding methyltransferase superfamily. CHO2 family.</text>
</comment>
<dbReference type="EC" id="2.1.1.17" evidence="1"/>
<dbReference type="EMBL" id="CR382133">
    <property type="protein sequence ID" value="CAG84868.2"/>
    <property type="molecule type" value="Genomic_DNA"/>
</dbReference>
<dbReference type="RefSeq" id="XP_456891.2">
    <property type="nucleotide sequence ID" value="XM_456891.1"/>
</dbReference>
<dbReference type="SMR" id="Q6BY28"/>
<dbReference type="FunCoup" id="Q6BY28">
    <property type="interactions" value="76"/>
</dbReference>
<dbReference type="STRING" id="284592.Q6BY28"/>
<dbReference type="GeneID" id="2899414"/>
<dbReference type="KEGG" id="dha:DEHA2A12936g"/>
<dbReference type="VEuPathDB" id="FungiDB:DEHA2A12936g"/>
<dbReference type="eggNOG" id="ENOG502QRGH">
    <property type="taxonomic scope" value="Eukaryota"/>
</dbReference>
<dbReference type="HOGENOM" id="CLU_005987_0_1_1"/>
<dbReference type="InParanoid" id="Q6BY28"/>
<dbReference type="OMA" id="RIWYSVG"/>
<dbReference type="OrthoDB" id="4583at2759"/>
<dbReference type="UniPathway" id="UPA00753"/>
<dbReference type="Proteomes" id="UP000000599">
    <property type="component" value="Chromosome A"/>
</dbReference>
<dbReference type="GO" id="GO:0005789">
    <property type="term" value="C:endoplasmic reticulum membrane"/>
    <property type="evidence" value="ECO:0007669"/>
    <property type="project" value="UniProtKB-SubCell"/>
</dbReference>
<dbReference type="GO" id="GO:0004608">
    <property type="term" value="F:phosphatidylethanolamine N-methyltransferase activity"/>
    <property type="evidence" value="ECO:0007669"/>
    <property type="project" value="UniProtKB-UniRule"/>
</dbReference>
<dbReference type="GO" id="GO:0032259">
    <property type="term" value="P:methylation"/>
    <property type="evidence" value="ECO:0007669"/>
    <property type="project" value="UniProtKB-KW"/>
</dbReference>
<dbReference type="GO" id="GO:0006656">
    <property type="term" value="P:phosphatidylcholine biosynthetic process"/>
    <property type="evidence" value="ECO:0007669"/>
    <property type="project" value="UniProtKB-UniRule"/>
</dbReference>
<dbReference type="FunFam" id="1.20.120.1630:FF:000016">
    <property type="entry name" value="Phosphatidylethanolamine N-methyltransferase"/>
    <property type="match status" value="1"/>
</dbReference>
<dbReference type="Gene3D" id="1.20.120.1630">
    <property type="match status" value="1"/>
</dbReference>
<dbReference type="Gene3D" id="2.60.40.2840">
    <property type="match status" value="1"/>
</dbReference>
<dbReference type="HAMAP" id="MF_03217">
    <property type="entry name" value="PEMT"/>
    <property type="match status" value="1"/>
</dbReference>
<dbReference type="InterPro" id="IPR007318">
    <property type="entry name" value="Phopholipid_MeTrfase"/>
</dbReference>
<dbReference type="InterPro" id="IPR016219">
    <property type="entry name" value="Phosphatid-EA_MeTrfase_fun"/>
</dbReference>
<dbReference type="InterPro" id="IPR041611">
    <property type="entry name" value="SKICH"/>
</dbReference>
<dbReference type="PANTHER" id="PTHR32138">
    <property type="entry name" value="PHOSPHATIDYLETHANOLAMINE N-METHYLTRANSFERASE"/>
    <property type="match status" value="1"/>
</dbReference>
<dbReference type="PANTHER" id="PTHR32138:SF0">
    <property type="entry name" value="PHOSPHATIDYLETHANOLAMINE N-METHYLTRANSFERASE"/>
    <property type="match status" value="1"/>
</dbReference>
<dbReference type="Pfam" id="PF04191">
    <property type="entry name" value="PEMT"/>
    <property type="match status" value="2"/>
</dbReference>
<dbReference type="Pfam" id="PF17751">
    <property type="entry name" value="SKICH"/>
    <property type="match status" value="1"/>
</dbReference>
<dbReference type="PIRSF" id="PIRSF000383">
    <property type="entry name" value="PEAMT"/>
    <property type="match status" value="1"/>
</dbReference>
<dbReference type="PROSITE" id="PS50244">
    <property type="entry name" value="S5A_REDUCTASE"/>
    <property type="match status" value="1"/>
</dbReference>
<dbReference type="PROSITE" id="PS51598">
    <property type="entry name" value="SAM_CHO2"/>
    <property type="match status" value="1"/>
</dbReference>